<evidence type="ECO:0000255" key="1">
    <source>
        <dbReference type="HAMAP-Rule" id="MF_00386"/>
    </source>
</evidence>
<protein>
    <recommendedName>
        <fullName evidence="1">Putative membrane protein insertion efficiency factor</fullName>
    </recommendedName>
</protein>
<gene>
    <name type="ordered locus">BCG9842_B0320</name>
</gene>
<reference key="1">
    <citation type="submission" date="2008-10" db="EMBL/GenBank/DDBJ databases">
        <title>Genome sequence of Bacillus cereus G9842.</title>
        <authorList>
            <person name="Dodson R.J."/>
            <person name="Durkin A.S."/>
            <person name="Rosovitz M.J."/>
            <person name="Rasko D.A."/>
            <person name="Hoffmaster A."/>
            <person name="Ravel J."/>
            <person name="Sutton G."/>
        </authorList>
    </citation>
    <scope>NUCLEOTIDE SEQUENCE [LARGE SCALE GENOMIC DNA]</scope>
    <source>
        <strain>G9842</strain>
    </source>
</reference>
<dbReference type="EMBL" id="CP001186">
    <property type="protein sequence ID" value="ACK96273.1"/>
    <property type="molecule type" value="Genomic_DNA"/>
</dbReference>
<dbReference type="KEGG" id="bcg:BCG9842_B0320"/>
<dbReference type="HOGENOM" id="CLU_144811_6_0_9"/>
<dbReference type="Proteomes" id="UP000006744">
    <property type="component" value="Chromosome"/>
</dbReference>
<dbReference type="GO" id="GO:0005886">
    <property type="term" value="C:plasma membrane"/>
    <property type="evidence" value="ECO:0007669"/>
    <property type="project" value="UniProtKB-SubCell"/>
</dbReference>
<dbReference type="HAMAP" id="MF_00386">
    <property type="entry name" value="UPF0161_YidD"/>
    <property type="match status" value="1"/>
</dbReference>
<dbReference type="InterPro" id="IPR002696">
    <property type="entry name" value="Membr_insert_effic_factor_YidD"/>
</dbReference>
<dbReference type="NCBIfam" id="TIGR00278">
    <property type="entry name" value="membrane protein insertion efficiency factor YidD"/>
    <property type="match status" value="1"/>
</dbReference>
<dbReference type="PANTHER" id="PTHR33383">
    <property type="entry name" value="MEMBRANE PROTEIN INSERTION EFFICIENCY FACTOR-RELATED"/>
    <property type="match status" value="1"/>
</dbReference>
<dbReference type="PANTHER" id="PTHR33383:SF1">
    <property type="entry name" value="MEMBRANE PROTEIN INSERTION EFFICIENCY FACTOR-RELATED"/>
    <property type="match status" value="1"/>
</dbReference>
<dbReference type="Pfam" id="PF01809">
    <property type="entry name" value="YidD"/>
    <property type="match status" value="1"/>
</dbReference>
<dbReference type="SMART" id="SM01234">
    <property type="entry name" value="Haemolytic"/>
    <property type="match status" value="1"/>
</dbReference>
<comment type="function">
    <text evidence="1">Could be involved in insertion of integral membrane proteins into the membrane.</text>
</comment>
<comment type="subcellular location">
    <subcellularLocation>
        <location evidence="1">Cell membrane</location>
        <topology evidence="1">Peripheral membrane protein</topology>
        <orientation evidence="1">Cytoplasmic side</orientation>
    </subcellularLocation>
</comment>
<comment type="similarity">
    <text evidence="1">Belongs to the UPF0161 family.</text>
</comment>
<proteinExistence type="inferred from homology"/>
<organism>
    <name type="scientific">Bacillus cereus (strain G9842)</name>
    <dbReference type="NCBI Taxonomy" id="405531"/>
    <lineage>
        <taxon>Bacteria</taxon>
        <taxon>Bacillati</taxon>
        <taxon>Bacillota</taxon>
        <taxon>Bacilli</taxon>
        <taxon>Bacillales</taxon>
        <taxon>Bacillaceae</taxon>
        <taxon>Bacillus</taxon>
        <taxon>Bacillus cereus group</taxon>
    </lineage>
</organism>
<feature type="chain" id="PRO_1000122615" description="Putative membrane protein insertion efficiency factor">
    <location>
        <begin position="1"/>
        <end position="78"/>
    </location>
</feature>
<name>YIDD_BACC2</name>
<sequence>MKQIFIGIIRFYQKFISPMTPPTCRFYPTCSHYGLEAFQKHGALKGFWLTCKRILKCHPFHPGGFDPVPDKKDDKVNS</sequence>
<accession>B7ILV5</accession>
<keyword id="KW-1003">Cell membrane</keyword>
<keyword id="KW-0472">Membrane</keyword>